<feature type="signal peptide" evidence="4 5 6 7">
    <location>
        <begin position="1"/>
        <end position="24"/>
    </location>
</feature>
<feature type="chain" id="PRO_0000096223" description="Thaumatin-like protein">
    <location>
        <begin position="25"/>
        <end position="225"/>
    </location>
</feature>
<feature type="glycosylation site" description="N-linked (GlcNAc...) asparagine" evidence="2">
    <location>
        <position position="187"/>
    </location>
</feature>
<feature type="disulfide bond" evidence="3">
    <location>
        <begin position="33"/>
        <end position="224"/>
    </location>
</feature>
<feature type="disulfide bond" evidence="3">
    <location>
        <begin position="74"/>
        <end position="84"/>
    </location>
</feature>
<feature type="disulfide bond" evidence="3">
    <location>
        <begin position="89"/>
        <end position="95"/>
    </location>
</feature>
<feature type="disulfide bond" evidence="3">
    <location>
        <begin position="140"/>
        <end position="213"/>
    </location>
</feature>
<feature type="disulfide bond" evidence="3">
    <location>
        <begin position="146"/>
        <end position="196"/>
    </location>
</feature>
<feature type="disulfide bond" evidence="3">
    <location>
        <begin position="154"/>
        <end position="164"/>
    </location>
</feature>
<feature type="disulfide bond" evidence="3">
    <location>
        <begin position="168"/>
        <end position="177"/>
    </location>
</feature>
<feature type="disulfide bond" evidence="3">
    <location>
        <begin position="178"/>
        <end position="183"/>
    </location>
</feature>
<feature type="sequence conflict" description="In Ref. 2; ABQ42566." evidence="8" ref="2">
    <original>G</original>
    <variation>S</variation>
    <location>
        <position position="60"/>
    </location>
</feature>
<feature type="sequence conflict" description="In Ref. 2; ABQ42566." evidence="8" ref="2">
    <original>Y</original>
    <variation>F</variation>
    <location>
        <position position="176"/>
    </location>
</feature>
<feature type="strand" evidence="9">
    <location>
        <begin position="27"/>
        <end position="31"/>
    </location>
</feature>
<feature type="strand" evidence="9">
    <location>
        <begin position="33"/>
        <end position="35"/>
    </location>
</feature>
<feature type="strand" evidence="9">
    <location>
        <begin position="37"/>
        <end position="42"/>
    </location>
</feature>
<feature type="strand" evidence="9">
    <location>
        <begin position="45"/>
        <end position="49"/>
    </location>
</feature>
<feature type="strand" evidence="9">
    <location>
        <begin position="54"/>
        <end position="57"/>
    </location>
</feature>
<feature type="strand" evidence="9">
    <location>
        <begin position="65"/>
        <end position="76"/>
    </location>
</feature>
<feature type="strand" evidence="9">
    <location>
        <begin position="80"/>
        <end position="87"/>
    </location>
</feature>
<feature type="strand" evidence="9">
    <location>
        <begin position="92"/>
        <end position="94"/>
    </location>
</feature>
<feature type="strand" evidence="9">
    <location>
        <begin position="105"/>
        <end position="113"/>
    </location>
</feature>
<feature type="strand" evidence="9">
    <location>
        <begin position="116"/>
        <end position="122"/>
    </location>
</feature>
<feature type="strand" evidence="9">
    <location>
        <begin position="127"/>
        <end position="129"/>
    </location>
</feature>
<feature type="strand" evidence="9">
    <location>
        <begin position="131"/>
        <end position="135"/>
    </location>
</feature>
<feature type="strand" evidence="9">
    <location>
        <begin position="144"/>
        <end position="146"/>
    </location>
</feature>
<feature type="helix" evidence="9">
    <location>
        <begin position="150"/>
        <end position="153"/>
    </location>
</feature>
<feature type="helix" evidence="9">
    <location>
        <begin position="156"/>
        <end position="158"/>
    </location>
</feature>
<feature type="helix" evidence="9">
    <location>
        <begin position="167"/>
        <end position="171"/>
    </location>
</feature>
<feature type="helix" evidence="9">
    <location>
        <begin position="174"/>
        <end position="177"/>
    </location>
</feature>
<feature type="helix" evidence="9">
    <location>
        <begin position="187"/>
        <end position="195"/>
    </location>
</feature>
<feature type="strand" evidence="9">
    <location>
        <begin position="199"/>
        <end position="202"/>
    </location>
</feature>
<feature type="helix" evidence="9">
    <location>
        <begin position="206"/>
        <end position="208"/>
    </location>
</feature>
<feature type="strand" evidence="9">
    <location>
        <begin position="211"/>
        <end position="214"/>
    </location>
</feature>
<feature type="strand" evidence="9">
    <location>
        <begin position="219"/>
        <end position="223"/>
    </location>
</feature>
<name>TLP_ACTDE</name>
<comment type="function">
    <text evidence="1">Has antifungal activity.</text>
</comment>
<comment type="interaction">
    <interactant intactId="EBI-9212168">
        <id>P81370</id>
    </interactant>
    <interactant intactId="EBI-9212161">
        <id>P79085</id>
        <label>ALTA1</label>
    </interactant>
    <organismsDiffer>true</organismsDiffer>
    <experiments>3</experiments>
</comment>
<comment type="subcellular location">
    <subcellularLocation>
        <location evidence="1">Secreted</location>
    </subcellularLocation>
</comment>
<comment type="tissue specificity">
    <text>Woody stem plug.</text>
</comment>
<comment type="PTM">
    <text evidence="5">N-glycosylated.</text>
</comment>
<comment type="allergen">
    <text evidence="4 5">Causes an allergic reaction in human. Binds IgE.</text>
</comment>
<comment type="similarity">
    <text evidence="3">Belongs to the thaumatin family.</text>
</comment>
<organism>
    <name type="scientific">Actinidia deliciosa</name>
    <name type="common">Kiwi</name>
    <dbReference type="NCBI Taxonomy" id="3627"/>
    <lineage>
        <taxon>Eukaryota</taxon>
        <taxon>Viridiplantae</taxon>
        <taxon>Streptophyta</taxon>
        <taxon>Embryophyta</taxon>
        <taxon>Tracheophyta</taxon>
        <taxon>Spermatophyta</taxon>
        <taxon>Magnoliopsida</taxon>
        <taxon>eudicotyledons</taxon>
        <taxon>Gunneridae</taxon>
        <taxon>Pentapetalae</taxon>
        <taxon>asterids</taxon>
        <taxon>Ericales</taxon>
        <taxon>Actinidiaceae</taxon>
        <taxon>Actinidia</taxon>
    </lineage>
</organism>
<keyword id="KW-0002">3D-structure</keyword>
<keyword id="KW-0020">Allergen</keyword>
<keyword id="KW-0929">Antimicrobial</keyword>
<keyword id="KW-0903">Direct protein sequencing</keyword>
<keyword id="KW-1015">Disulfide bond</keyword>
<keyword id="KW-0295">Fungicide</keyword>
<keyword id="KW-0325">Glycoprotein</keyword>
<keyword id="KW-0568">Pathogenesis-related protein</keyword>
<keyword id="KW-0611">Plant defense</keyword>
<keyword id="KW-0964">Secreted</keyword>
<keyword id="KW-0732">Signal</keyword>
<protein>
    <recommendedName>
        <fullName>Thaumatin-like protein</fullName>
    </recommendedName>
    <allergenName>Act d 2</allergenName>
</protein>
<gene>
    <name type="primary">tlp</name>
</gene>
<sequence length="225" mass="24221">MSTFKSLSLSALLFIAFLFTCARGATFNIINNCPFTVWAAAVPGGGKRLDRGQNWIINPGAGTKGARVWPRTGCNFDGAGRGKCQTGDCNGLLQCQAFGQPPNTLAEYALNQFNNLDFFDISLVDGFNVAMEFSPTSGGCTRGIKCTADINGQCPNELRAPGGCNNPCTVFKTDQYCCNSGNCGLTNFSKFFKDRCPDAYSYPKDDQTSTFTCPAGTNYKVVFCP</sequence>
<dbReference type="EMBL" id="AJ871175">
    <property type="protein sequence ID" value="CAI38795.2"/>
    <property type="molecule type" value="mRNA"/>
</dbReference>
<dbReference type="EMBL" id="EF417825">
    <property type="protein sequence ID" value="ABQ42566.1"/>
    <property type="molecule type" value="Genomic_DNA"/>
</dbReference>
<dbReference type="PDB" id="4BCT">
    <property type="method" value="X-ray"/>
    <property type="resolution" value="0.98 A"/>
    <property type="chains" value="A=25-225"/>
</dbReference>
<dbReference type="PDBsum" id="4BCT"/>
<dbReference type="SMR" id="P81370"/>
<dbReference type="IntAct" id="P81370">
    <property type="interactions" value="1"/>
</dbReference>
<dbReference type="MINT" id="P81370"/>
<dbReference type="Allergome" id="3053">
    <property type="allergen name" value="Act d 2.0101"/>
</dbReference>
<dbReference type="Allergome" id="747">
    <property type="allergen name" value="Act d 2"/>
</dbReference>
<dbReference type="GlyCosmos" id="P81370">
    <property type="glycosylation" value="1 site, No reported glycans"/>
</dbReference>
<dbReference type="EvolutionaryTrace" id="P81370"/>
<dbReference type="GO" id="GO:0005576">
    <property type="term" value="C:extracellular region"/>
    <property type="evidence" value="ECO:0007669"/>
    <property type="project" value="UniProtKB-SubCell"/>
</dbReference>
<dbReference type="GO" id="GO:0050832">
    <property type="term" value="P:defense response to fungus"/>
    <property type="evidence" value="ECO:0007669"/>
    <property type="project" value="UniProtKB-KW"/>
</dbReference>
<dbReference type="GO" id="GO:0031640">
    <property type="term" value="P:killing of cells of another organism"/>
    <property type="evidence" value="ECO:0007669"/>
    <property type="project" value="UniProtKB-KW"/>
</dbReference>
<dbReference type="FunFam" id="2.60.110.10:FF:000003">
    <property type="entry name" value="Thaumatin I"/>
    <property type="match status" value="1"/>
</dbReference>
<dbReference type="Gene3D" id="2.60.110.10">
    <property type="entry name" value="Thaumatin"/>
    <property type="match status" value="1"/>
</dbReference>
<dbReference type="InterPro" id="IPR037176">
    <property type="entry name" value="Osmotin/thaumatin-like_sf"/>
</dbReference>
<dbReference type="InterPro" id="IPR001938">
    <property type="entry name" value="Thaumatin"/>
</dbReference>
<dbReference type="InterPro" id="IPR017949">
    <property type="entry name" value="Thaumatin_CS"/>
</dbReference>
<dbReference type="PANTHER" id="PTHR31048">
    <property type="entry name" value="OS03G0233200 PROTEIN"/>
    <property type="match status" value="1"/>
</dbReference>
<dbReference type="Pfam" id="PF00314">
    <property type="entry name" value="Thaumatin"/>
    <property type="match status" value="1"/>
</dbReference>
<dbReference type="PIRSF" id="PIRSF002703">
    <property type="entry name" value="Thaumatin"/>
    <property type="match status" value="1"/>
</dbReference>
<dbReference type="PRINTS" id="PR00347">
    <property type="entry name" value="THAUMATIN"/>
</dbReference>
<dbReference type="SMART" id="SM00205">
    <property type="entry name" value="THN"/>
    <property type="match status" value="1"/>
</dbReference>
<dbReference type="SUPFAM" id="SSF49870">
    <property type="entry name" value="Osmotin, thaumatin-like protein"/>
    <property type="match status" value="1"/>
</dbReference>
<dbReference type="PROSITE" id="PS00316">
    <property type="entry name" value="THAUMATIN_1"/>
    <property type="match status" value="1"/>
</dbReference>
<dbReference type="PROSITE" id="PS51367">
    <property type="entry name" value="THAUMATIN_2"/>
    <property type="match status" value="1"/>
</dbReference>
<evidence type="ECO:0000250" key="1"/>
<evidence type="ECO:0000255" key="2"/>
<evidence type="ECO:0000255" key="3">
    <source>
        <dbReference type="PROSITE-ProRule" id="PRU00699"/>
    </source>
</evidence>
<evidence type="ECO:0000269" key="4">
    <source>
    </source>
</evidence>
<evidence type="ECO:0000269" key="5">
    <source>
    </source>
</evidence>
<evidence type="ECO:0000269" key="6">
    <source>
    </source>
</evidence>
<evidence type="ECO:0000269" key="7">
    <source ref="3"/>
</evidence>
<evidence type="ECO:0000305" key="8"/>
<evidence type="ECO:0007829" key="9">
    <source>
        <dbReference type="PDB" id="4BCT"/>
    </source>
</evidence>
<proteinExistence type="evidence at protein level"/>
<accession>P81370</accession>
<accession>A5JGY0</accession>
<accession>Q5ND92</accession>
<reference key="1">
    <citation type="submission" date="2005-07" db="EMBL/GenBank/DDBJ databases">
        <authorList>
            <person name="Radauer C."/>
        </authorList>
    </citation>
    <scope>NUCLEOTIDE SEQUENCE [MRNA]</scope>
    <source>
        <tissue>Fruit</tissue>
    </source>
</reference>
<reference key="2">
    <citation type="submission" date="2007-01" db="EMBL/GenBank/DDBJ databases">
        <title>Thaumatin-like kiwi protein, Act d 2 allergen.</title>
        <authorList>
            <person name="Gavrovic-Jankulovic M."/>
        </authorList>
    </citation>
    <scope>NUCLEOTIDE SEQUENCE [GENOMIC DNA] OF 25-225</scope>
</reference>
<reference key="3">
    <citation type="journal article" date="1999" name="J. Sci. Food Agric.">
        <title>Thaumatin-like protein in kiwifruit.</title>
        <authorList>
            <person name="Wurms K.V."/>
            <person name="Greenwood D.R."/>
            <person name="Sharrock K.R."/>
            <person name="Long P.G."/>
        </authorList>
        <dbReference type="AGRICOLA" id="IND22033965"/>
    </citation>
    <scope>PROTEIN SEQUENCE OF 25-53</scope>
    <source>
        <strain>cv. Hayward</strain>
        <tissue>Stem plug</tissue>
    </source>
</reference>
<reference key="4">
    <citation type="journal article" date="2004" name="J. Allergy Clin. Immunol.">
        <title>IgE sensitization profiles toward green and gold kiwifruits differ among patients allergic to kiwifruit from 3 European countries.</title>
        <authorList>
            <person name="Bublin M."/>
            <person name="Mari A."/>
            <person name="Ebner C."/>
            <person name="Knulst A."/>
            <person name="Scheiner O."/>
            <person name="Hoffmann-Sommergruber K."/>
            <person name="Breiteneder H."/>
            <person name="Radauer C."/>
        </authorList>
    </citation>
    <scope>PROTEIN SEQUENCE OF 25-34</scope>
    <scope>ALLERGEN</scope>
    <source>
        <strain>cv. Hayward</strain>
        <tissue>Fruit</tissue>
    </source>
</reference>
<reference key="5">
    <citation type="journal article" date="2008" name="J. Agric. Food Chem.">
        <title>Kiwellin, a modular protein from green and gold kiwi fruits: evidence of in vivo and in vitro processing and IgE binding.</title>
        <authorList>
            <person name="Tuppo L."/>
            <person name="Giangrieco I."/>
            <person name="Palazzo P."/>
            <person name="Bernardi M.L."/>
            <person name="Scala E."/>
            <person name="Carratore V."/>
            <person name="Tamburrini M."/>
            <person name="Mari A."/>
            <person name="Ciardiello M.A."/>
        </authorList>
    </citation>
    <scope>PROTEIN SEQUENCE OF 25-32</scope>
    <source>
        <strain>cv. Hayward</strain>
        <tissue>Fruit</tissue>
    </source>
</reference>
<reference key="6">
    <citation type="journal article" date="2008" name="Clin. Exp. Allergy">
        <title>Immunoglobulin E recognition patterns to purified Kiwifruit (Actinidinia deliciosa) allergens in patients sensitized to Kiwi with different clinical symptoms.</title>
        <authorList>
            <person name="Palacin A."/>
            <person name="Rodriguez J."/>
            <person name="Blanco C."/>
            <person name="Lopez-Torrejon G."/>
            <person name="Sanchez-Monge R."/>
            <person name="Varela J."/>
            <person name="Jimenez M.A."/>
            <person name="Cumplido J."/>
            <person name="Carrillo T."/>
            <person name="Crespo J.F."/>
            <person name="Salcedo G."/>
        </authorList>
    </citation>
    <scope>PROTEIN SEQUENCE OF 25-29</scope>
    <scope>GLYCOSYLATION</scope>
    <scope>ALLERGEN</scope>
    <source>
        <strain>cv. Hayward</strain>
        <tissue>Fruit</tissue>
    </source>
</reference>